<organism>
    <name type="scientific">Caenorhabditis elegans</name>
    <dbReference type="NCBI Taxonomy" id="6239"/>
    <lineage>
        <taxon>Eukaryota</taxon>
        <taxon>Metazoa</taxon>
        <taxon>Ecdysozoa</taxon>
        <taxon>Nematoda</taxon>
        <taxon>Chromadorea</taxon>
        <taxon>Rhabditida</taxon>
        <taxon>Rhabditina</taxon>
        <taxon>Rhabditomorpha</taxon>
        <taxon>Rhabditoidea</taxon>
        <taxon>Rhabditidae</taxon>
        <taxon>Peloderinae</taxon>
        <taxon>Caenorhabditis</taxon>
    </lineage>
</organism>
<sequence length="569" mass="64867">MVETTGISDQTKKVLIGVAAAATVAGVGYLVYKSFGGSDLERDLEEIKALGNLKFKEKQYDSALEAFTKGVEKAGPNSSDQIVAMLYQNRAACREKVGHSPFDILNDCMAALKVDKKYTKAYLRAAKALNDVGKKQDALAYLLAAFTLDSSLNKTNFEFFGKLLAIEPMSDCHIGKPLKIEDVKPQPVALFRIQQWCDTWDILDLFKTDLTRFEPEVLSEDQKQYQLALEKFKKGKYEELIDLLTEENSYPPAMILRGKMLSYSTDPNEATRYIDKVGAKINELIGSEEDEERKKLMRDAFDILKIELMYTMADLDKFLESVPKDDKERLFKLYSFASIFVVIRLNHFYSLKIWFQYNGCVLDTAVTNHEQQMMADTNNANRLLTEAEKNGTLTPHLSMIVTFLKLCTSEDYADVHRRIREMEELAESRSTHFNLVLMSKVYMMTNNEESSKKLLEEAARITTRYLVPSRHLQTADLHVHKPEAERLRLTTESANAAIAVDPFNFSAHVLHLLGTNGPEPMIKKENYERAMESIRNAALFAPPRELLMLKRMIPLMNAKKRAAEMLDMY</sequence>
<evidence type="ECO:0000250" key="1">
    <source>
        <dbReference type="UniProtKB" id="P07213"/>
    </source>
</evidence>
<evidence type="ECO:0000250" key="2">
    <source>
        <dbReference type="UniProtKB" id="Q75Q39"/>
    </source>
</evidence>
<evidence type="ECO:0000255" key="3"/>
<evidence type="ECO:0000269" key="4">
    <source>
    </source>
</evidence>
<evidence type="ECO:0000305" key="5"/>
<evidence type="ECO:0000312" key="6">
    <source>
        <dbReference type="WormBase" id="ZK370.8"/>
    </source>
</evidence>
<feature type="chain" id="PRO_0000106424" description="Mitochondrial import receptor subunit tomm-70">
    <location>
        <begin position="1"/>
        <end position="569"/>
    </location>
</feature>
<feature type="topological domain" description="Mitochondrial intermembrane" evidence="5">
    <location>
        <begin position="1"/>
        <end position="12"/>
    </location>
</feature>
<feature type="transmembrane region" description="Helical" evidence="3">
    <location>
        <begin position="13"/>
        <end position="32"/>
    </location>
</feature>
<feature type="topological domain" description="Cytoplasmic" evidence="5">
    <location>
        <begin position="33"/>
        <end position="569"/>
    </location>
</feature>
<feature type="repeat" description="TPR 1" evidence="3">
    <location>
        <begin position="44"/>
        <end position="77"/>
    </location>
</feature>
<feature type="repeat" description="TPR 2" evidence="3">
    <location>
        <begin position="119"/>
        <end position="152"/>
    </location>
</feature>
<feature type="repeat" description="TPR 3" evidence="3">
    <location>
        <begin position="221"/>
        <end position="254"/>
    </location>
</feature>
<feature type="repeat" description="TPR 4" evidence="3">
    <location>
        <begin position="510"/>
        <end position="544"/>
    </location>
</feature>
<reference key="1">
    <citation type="journal article" date="1994" name="Nature">
        <title>2.2 Mb of contiguous nucleotide sequence from chromosome III of C. elegans.</title>
        <authorList>
            <person name="Wilson R."/>
            <person name="Ainscough R."/>
            <person name="Anderson K."/>
            <person name="Baynes C."/>
            <person name="Berks M."/>
            <person name="Bonfield J."/>
            <person name="Burton J."/>
            <person name="Connell M."/>
            <person name="Copsey T."/>
            <person name="Cooper J."/>
            <person name="Coulson A."/>
            <person name="Craxton M."/>
            <person name="Dear S."/>
            <person name="Du Z."/>
            <person name="Durbin R."/>
            <person name="Favello A."/>
            <person name="Fraser A."/>
            <person name="Fulton L."/>
            <person name="Gardner A."/>
            <person name="Green P."/>
            <person name="Hawkins T."/>
            <person name="Hillier L."/>
            <person name="Jier M."/>
            <person name="Johnston L."/>
            <person name="Jones M."/>
            <person name="Kershaw J."/>
            <person name="Kirsten J."/>
            <person name="Laisster N."/>
            <person name="Latreille P."/>
            <person name="Lightning J."/>
            <person name="Lloyd C."/>
            <person name="Mortimore B."/>
            <person name="O'Callaghan M."/>
            <person name="Parsons J."/>
            <person name="Percy C."/>
            <person name="Rifken L."/>
            <person name="Roopra A."/>
            <person name="Saunders D."/>
            <person name="Shownkeen R."/>
            <person name="Sims M."/>
            <person name="Smaldon N."/>
            <person name="Smith A."/>
            <person name="Smith M."/>
            <person name="Sonnhammer E."/>
            <person name="Staden R."/>
            <person name="Sulston J."/>
            <person name="Thierry-Mieg J."/>
            <person name="Thomas K."/>
            <person name="Vaudin M."/>
            <person name="Vaughan K."/>
            <person name="Waterston R."/>
            <person name="Watson A."/>
            <person name="Weinstock L."/>
            <person name="Wilkinson-Sproat J."/>
            <person name="Wohldman P."/>
        </authorList>
    </citation>
    <scope>NUCLEOTIDE SEQUENCE [LARGE SCALE GENOMIC DNA]</scope>
    <source>
        <strain>Bristol N2</strain>
    </source>
</reference>
<reference key="2">
    <citation type="journal article" date="1998" name="Science">
        <title>Genome sequence of the nematode C. elegans: a platform for investigating biology.</title>
        <authorList>
            <consortium name="The C. elegans sequencing consortium"/>
        </authorList>
    </citation>
    <scope>NUCLEOTIDE SEQUENCE [LARGE SCALE GENOMIC DNA]</scope>
    <source>
        <strain>Bristol N2</strain>
    </source>
</reference>
<reference key="3">
    <citation type="journal article" date="2013" name="J. Mol. Biol.">
        <title>Chaperone-interacting TPR proteins in Caenorhabditis elegans.</title>
        <authorList>
            <person name="Haslbeck V."/>
            <person name="Eckl J.M."/>
            <person name="Kaiser C.J."/>
            <person name="Papsdorf K."/>
            <person name="Hessling M."/>
            <person name="Richter K."/>
        </authorList>
    </citation>
    <scope>SUBCELLULAR LOCATION</scope>
    <scope>TISSUE SPECIFICITY</scope>
</reference>
<name>TOM70_CAEEL</name>
<gene>
    <name evidence="6" type="primary">tomm-70</name>
    <name evidence="6" type="ORF">ZK370.8</name>
</gene>
<protein>
    <recommendedName>
        <fullName evidence="5">Mitochondrial import receptor subunit tomm-70</fullName>
    </recommendedName>
    <alternativeName>
        <fullName evidence="6">Translocase of outer mitochondrial membrane 70</fullName>
    </alternativeName>
</protein>
<proteinExistence type="evidence at transcript level"/>
<comment type="function">
    <text evidence="2">Receptor that accelerates the import of all mitochondrial precursor proteins.</text>
</comment>
<comment type="subunit">
    <text evidence="1">Forms part of the preprotein translocase complex of the outer mitochondrial membrane (TOM complex).</text>
</comment>
<comment type="subcellular location">
    <subcellularLocation>
        <location evidence="4">Mitochondrion outer membrane</location>
        <topology evidence="2">Single-pass membrane protein</topology>
    </subcellularLocation>
</comment>
<comment type="tissue specificity">
    <text evidence="4">Expressed in body wall muscle cells, the pharynx and structures in the tail.</text>
</comment>
<comment type="similarity">
    <text evidence="5">Belongs to the Tom70 family.</text>
</comment>
<accession>Q02335</accession>
<keyword id="KW-0472">Membrane</keyword>
<keyword id="KW-0496">Mitochondrion</keyword>
<keyword id="KW-1000">Mitochondrion outer membrane</keyword>
<keyword id="KW-1185">Reference proteome</keyword>
<keyword id="KW-0677">Repeat</keyword>
<keyword id="KW-0802">TPR repeat</keyword>
<keyword id="KW-0812">Transmembrane</keyword>
<keyword id="KW-1133">Transmembrane helix</keyword>
<dbReference type="EMBL" id="BX284603">
    <property type="protein sequence ID" value="CCD61727.1"/>
    <property type="molecule type" value="Genomic_DNA"/>
</dbReference>
<dbReference type="PIR" id="S44669">
    <property type="entry name" value="S44669"/>
</dbReference>
<dbReference type="RefSeq" id="NP_498932.3">
    <property type="nucleotide sequence ID" value="NM_066531.4"/>
</dbReference>
<dbReference type="SMR" id="Q02335"/>
<dbReference type="BioGRID" id="41431">
    <property type="interactions" value="9"/>
</dbReference>
<dbReference type="FunCoup" id="Q02335">
    <property type="interactions" value="290"/>
</dbReference>
<dbReference type="IntAct" id="Q02335">
    <property type="interactions" value="1"/>
</dbReference>
<dbReference type="STRING" id="6239.ZK370.8.1"/>
<dbReference type="PaxDb" id="6239-ZK370.8"/>
<dbReference type="PeptideAtlas" id="Q02335"/>
<dbReference type="EnsemblMetazoa" id="ZK370.8.1">
    <property type="protein sequence ID" value="ZK370.8.1"/>
    <property type="gene ID" value="WBGene00022722"/>
</dbReference>
<dbReference type="GeneID" id="176228"/>
<dbReference type="KEGG" id="cel:CELE_ZK370.8"/>
<dbReference type="UCSC" id="ZK370.8">
    <property type="organism name" value="c. elegans"/>
</dbReference>
<dbReference type="AGR" id="WB:WBGene00022722"/>
<dbReference type="CTD" id="176228"/>
<dbReference type="WormBase" id="ZK370.8">
    <property type="protein sequence ID" value="CE45970"/>
    <property type="gene ID" value="WBGene00022722"/>
    <property type="gene designation" value="tomm-70"/>
</dbReference>
<dbReference type="eggNOG" id="ENOG502SA77">
    <property type="taxonomic scope" value="Eukaryota"/>
</dbReference>
<dbReference type="HOGENOM" id="CLU_491954_0_0_1"/>
<dbReference type="InParanoid" id="Q02335"/>
<dbReference type="OrthoDB" id="1872379at2759"/>
<dbReference type="PhylomeDB" id="Q02335"/>
<dbReference type="Reactome" id="R-CEL-5689880">
    <property type="pathway name" value="Ub-specific processing proteases"/>
</dbReference>
<dbReference type="PRO" id="PR:Q02335"/>
<dbReference type="Proteomes" id="UP000001940">
    <property type="component" value="Chromosome III"/>
</dbReference>
<dbReference type="Bgee" id="WBGene00022722">
    <property type="expression patterns" value="Expressed in larva and 4 other cell types or tissues"/>
</dbReference>
<dbReference type="GO" id="GO:0005741">
    <property type="term" value="C:mitochondrial outer membrane"/>
    <property type="evidence" value="ECO:0000318"/>
    <property type="project" value="GO_Central"/>
</dbReference>
<dbReference type="GO" id="GO:0005739">
    <property type="term" value="C:mitochondrion"/>
    <property type="evidence" value="ECO:0000314"/>
    <property type="project" value="WormBase"/>
</dbReference>
<dbReference type="GO" id="GO:0030943">
    <property type="term" value="F:mitochondrion targeting sequence binding"/>
    <property type="evidence" value="ECO:0000318"/>
    <property type="project" value="GO_Central"/>
</dbReference>
<dbReference type="GO" id="GO:0002218">
    <property type="term" value="P:activation of innate immune response"/>
    <property type="evidence" value="ECO:0000250"/>
    <property type="project" value="UniProtKB"/>
</dbReference>
<dbReference type="GO" id="GO:0098586">
    <property type="term" value="P:cellular response to virus"/>
    <property type="evidence" value="ECO:0000250"/>
    <property type="project" value="UniProtKB"/>
</dbReference>
<dbReference type="GO" id="GO:0002230">
    <property type="term" value="P:positive regulation of defense response to virus by host"/>
    <property type="evidence" value="ECO:0000250"/>
    <property type="project" value="UniProtKB"/>
</dbReference>
<dbReference type="GO" id="GO:0032728">
    <property type="term" value="P:positive regulation of interferon-beta production"/>
    <property type="evidence" value="ECO:0000250"/>
    <property type="project" value="UniProtKB"/>
</dbReference>
<dbReference type="GO" id="GO:0030150">
    <property type="term" value="P:protein import into mitochondrial matrix"/>
    <property type="evidence" value="ECO:0000318"/>
    <property type="project" value="GO_Central"/>
</dbReference>
<dbReference type="GO" id="GO:0045039">
    <property type="term" value="P:protein insertion into mitochondrial inner membrane"/>
    <property type="evidence" value="ECO:0000318"/>
    <property type="project" value="GO_Central"/>
</dbReference>
<dbReference type="GO" id="GO:0042981">
    <property type="term" value="P:regulation of apoptotic process"/>
    <property type="evidence" value="ECO:0000250"/>
    <property type="project" value="UniProtKB"/>
</dbReference>
<dbReference type="Gene3D" id="1.25.40.10">
    <property type="entry name" value="Tetratricopeptide repeat domain"/>
    <property type="match status" value="1"/>
</dbReference>
<dbReference type="InterPro" id="IPR011990">
    <property type="entry name" value="TPR-like_helical_dom_sf"/>
</dbReference>
<dbReference type="InterPro" id="IPR019734">
    <property type="entry name" value="TPR_rpt"/>
</dbReference>
<dbReference type="PANTHER" id="PTHR46208">
    <property type="entry name" value="MITOCHONDRIAL IMPORT RECEPTOR SUBUNIT TOM70"/>
    <property type="match status" value="1"/>
</dbReference>
<dbReference type="PANTHER" id="PTHR46208:SF1">
    <property type="entry name" value="MITOCHONDRIAL IMPORT RECEPTOR SUBUNIT TOM70"/>
    <property type="match status" value="1"/>
</dbReference>
<dbReference type="SMART" id="SM00028">
    <property type="entry name" value="TPR"/>
    <property type="match status" value="2"/>
</dbReference>
<dbReference type="SUPFAM" id="SSF48452">
    <property type="entry name" value="TPR-like"/>
    <property type="match status" value="1"/>
</dbReference>